<organism>
    <name type="scientific">Streptococcus equi subsp. equi (strain 4047)</name>
    <dbReference type="NCBI Taxonomy" id="553482"/>
    <lineage>
        <taxon>Bacteria</taxon>
        <taxon>Bacillati</taxon>
        <taxon>Bacillota</taxon>
        <taxon>Bacilli</taxon>
        <taxon>Lactobacillales</taxon>
        <taxon>Streptococcaceae</taxon>
        <taxon>Streptococcus</taxon>
    </lineage>
</organism>
<sequence length="140" mass="15524">MMDIKQIQEALPHRYPMLLVDRILEASDDEIVAIKNVTINEPFFNGHFPQYPVMPGVLIMEALAQTAGVLELSKEENKGKLVFYAGMDKVKFKKQVVPGDQLVMTARFIKRRGTIAVVEAKAEVDGKLAASGTLTFAFGQ</sequence>
<comment type="function">
    <text evidence="1">Involved in unsaturated fatty acids biosynthesis. Catalyzes the dehydration of short chain beta-hydroxyacyl-ACPs and long chain saturated and unsaturated beta-hydroxyacyl-ACPs.</text>
</comment>
<comment type="catalytic activity">
    <reaction evidence="1">
        <text>a (3R)-hydroxyacyl-[ACP] = a (2E)-enoyl-[ACP] + H2O</text>
        <dbReference type="Rhea" id="RHEA:13097"/>
        <dbReference type="Rhea" id="RHEA-COMP:9925"/>
        <dbReference type="Rhea" id="RHEA-COMP:9945"/>
        <dbReference type="ChEBI" id="CHEBI:15377"/>
        <dbReference type="ChEBI" id="CHEBI:78784"/>
        <dbReference type="ChEBI" id="CHEBI:78827"/>
        <dbReference type="EC" id="4.2.1.59"/>
    </reaction>
</comment>
<comment type="subcellular location">
    <subcellularLocation>
        <location evidence="1">Cytoplasm</location>
    </subcellularLocation>
</comment>
<comment type="similarity">
    <text evidence="1">Belongs to the thioester dehydratase family. FabZ subfamily.</text>
</comment>
<evidence type="ECO:0000255" key="1">
    <source>
        <dbReference type="HAMAP-Rule" id="MF_00406"/>
    </source>
</evidence>
<feature type="chain" id="PRO_1000134711" description="3-hydroxyacyl-[acyl-carrier-protein] dehydratase FabZ">
    <location>
        <begin position="1"/>
        <end position="140"/>
    </location>
</feature>
<feature type="active site" evidence="1">
    <location>
        <position position="47"/>
    </location>
</feature>
<protein>
    <recommendedName>
        <fullName evidence="1">3-hydroxyacyl-[acyl-carrier-protein] dehydratase FabZ</fullName>
        <ecNumber evidence="1">4.2.1.59</ecNumber>
    </recommendedName>
    <alternativeName>
        <fullName evidence="1">(3R)-hydroxymyristoyl-[acyl-carrier-protein] dehydratase</fullName>
        <shortName evidence="1">(3R)-hydroxymyristoyl-ACP dehydrase</shortName>
    </alternativeName>
    <alternativeName>
        <fullName evidence="1">Beta-hydroxyacyl-ACP dehydratase</fullName>
    </alternativeName>
</protein>
<gene>
    <name evidence="1" type="primary">fabZ</name>
    <name type="ordered locus">SEQ_0485</name>
</gene>
<proteinExistence type="inferred from homology"/>
<dbReference type="EC" id="4.2.1.59" evidence="1"/>
<dbReference type="EMBL" id="FM204883">
    <property type="protein sequence ID" value="CAW92695.1"/>
    <property type="molecule type" value="Genomic_DNA"/>
</dbReference>
<dbReference type="RefSeq" id="WP_012515063.1">
    <property type="nucleotide sequence ID" value="NC_012471.1"/>
</dbReference>
<dbReference type="SMR" id="C0M854"/>
<dbReference type="GeneID" id="83704294"/>
<dbReference type="KEGG" id="seu:SEQ_0485"/>
<dbReference type="HOGENOM" id="CLU_078912_3_0_9"/>
<dbReference type="OrthoDB" id="9772788at2"/>
<dbReference type="Proteomes" id="UP000001365">
    <property type="component" value="Chromosome"/>
</dbReference>
<dbReference type="GO" id="GO:0005737">
    <property type="term" value="C:cytoplasm"/>
    <property type="evidence" value="ECO:0007669"/>
    <property type="project" value="UniProtKB-SubCell"/>
</dbReference>
<dbReference type="GO" id="GO:0016020">
    <property type="term" value="C:membrane"/>
    <property type="evidence" value="ECO:0007669"/>
    <property type="project" value="GOC"/>
</dbReference>
<dbReference type="GO" id="GO:0019171">
    <property type="term" value="F:(3R)-hydroxyacyl-[acyl-carrier-protein] dehydratase activity"/>
    <property type="evidence" value="ECO:0007669"/>
    <property type="project" value="UniProtKB-EC"/>
</dbReference>
<dbReference type="GO" id="GO:0006633">
    <property type="term" value="P:fatty acid biosynthetic process"/>
    <property type="evidence" value="ECO:0007669"/>
    <property type="project" value="UniProtKB-UniRule"/>
</dbReference>
<dbReference type="GO" id="GO:0009245">
    <property type="term" value="P:lipid A biosynthetic process"/>
    <property type="evidence" value="ECO:0007669"/>
    <property type="project" value="UniProtKB-UniRule"/>
</dbReference>
<dbReference type="CDD" id="cd01288">
    <property type="entry name" value="FabZ"/>
    <property type="match status" value="1"/>
</dbReference>
<dbReference type="FunFam" id="3.10.129.10:FF:000001">
    <property type="entry name" value="3-hydroxyacyl-[acyl-carrier-protein] dehydratase FabZ"/>
    <property type="match status" value="1"/>
</dbReference>
<dbReference type="Gene3D" id="3.10.129.10">
    <property type="entry name" value="Hotdog Thioesterase"/>
    <property type="match status" value="1"/>
</dbReference>
<dbReference type="HAMAP" id="MF_00406">
    <property type="entry name" value="FabZ"/>
    <property type="match status" value="1"/>
</dbReference>
<dbReference type="InterPro" id="IPR013114">
    <property type="entry name" value="FabA_FabZ"/>
</dbReference>
<dbReference type="InterPro" id="IPR010084">
    <property type="entry name" value="FabZ"/>
</dbReference>
<dbReference type="InterPro" id="IPR029069">
    <property type="entry name" value="HotDog_dom_sf"/>
</dbReference>
<dbReference type="NCBIfam" id="TIGR01750">
    <property type="entry name" value="fabZ"/>
    <property type="match status" value="1"/>
</dbReference>
<dbReference type="NCBIfam" id="NF000582">
    <property type="entry name" value="PRK00006.1"/>
    <property type="match status" value="1"/>
</dbReference>
<dbReference type="PANTHER" id="PTHR30272">
    <property type="entry name" value="3-HYDROXYACYL-[ACYL-CARRIER-PROTEIN] DEHYDRATASE"/>
    <property type="match status" value="1"/>
</dbReference>
<dbReference type="PANTHER" id="PTHR30272:SF1">
    <property type="entry name" value="3-HYDROXYACYL-[ACYL-CARRIER-PROTEIN] DEHYDRATASE"/>
    <property type="match status" value="1"/>
</dbReference>
<dbReference type="Pfam" id="PF07977">
    <property type="entry name" value="FabA"/>
    <property type="match status" value="1"/>
</dbReference>
<dbReference type="SUPFAM" id="SSF54637">
    <property type="entry name" value="Thioesterase/thiol ester dehydrase-isomerase"/>
    <property type="match status" value="1"/>
</dbReference>
<name>FABZ_STRE4</name>
<reference key="1">
    <citation type="journal article" date="2009" name="PLoS Pathog.">
        <title>Genomic evidence for the evolution of Streptococcus equi: host restriction, increased virulence, and genetic exchange with human pathogens.</title>
        <authorList>
            <person name="Holden M.T.G."/>
            <person name="Heather Z."/>
            <person name="Paillot R."/>
            <person name="Steward K.F."/>
            <person name="Webb K."/>
            <person name="Ainslie F."/>
            <person name="Jourdan T."/>
            <person name="Bason N.C."/>
            <person name="Holroyd N.E."/>
            <person name="Mungall K."/>
            <person name="Quail M.A."/>
            <person name="Sanders M."/>
            <person name="Simmonds M."/>
            <person name="Willey D."/>
            <person name="Brooks K."/>
            <person name="Aanensen D.M."/>
            <person name="Spratt B.G."/>
            <person name="Jolley K.A."/>
            <person name="Maiden M.C.J."/>
            <person name="Kehoe M."/>
            <person name="Chanter N."/>
            <person name="Bentley S.D."/>
            <person name="Robinson C."/>
            <person name="Maskell D.J."/>
            <person name="Parkhill J."/>
            <person name="Waller A.S."/>
        </authorList>
    </citation>
    <scope>NUCLEOTIDE SEQUENCE [LARGE SCALE GENOMIC DNA]</scope>
    <source>
        <strain>4047</strain>
    </source>
</reference>
<keyword id="KW-0963">Cytoplasm</keyword>
<keyword id="KW-0441">Lipid A biosynthesis</keyword>
<keyword id="KW-0444">Lipid biosynthesis</keyword>
<keyword id="KW-0443">Lipid metabolism</keyword>
<keyword id="KW-0456">Lyase</keyword>
<accession>C0M854</accession>